<dbReference type="EMBL" id="AP008957">
    <property type="protein sequence ID" value="BAH32587.1"/>
    <property type="molecule type" value="Genomic_DNA"/>
</dbReference>
<dbReference type="RefSeq" id="WP_003940683.1">
    <property type="nucleotide sequence ID" value="NC_012490.1"/>
</dbReference>
<dbReference type="SMR" id="C0ZW52"/>
<dbReference type="GeneID" id="93803278"/>
<dbReference type="KEGG" id="rer:RER_18790"/>
<dbReference type="eggNOG" id="COG0100">
    <property type="taxonomic scope" value="Bacteria"/>
</dbReference>
<dbReference type="HOGENOM" id="CLU_072439_5_0_11"/>
<dbReference type="Proteomes" id="UP000002204">
    <property type="component" value="Chromosome"/>
</dbReference>
<dbReference type="GO" id="GO:1990904">
    <property type="term" value="C:ribonucleoprotein complex"/>
    <property type="evidence" value="ECO:0007669"/>
    <property type="project" value="UniProtKB-KW"/>
</dbReference>
<dbReference type="GO" id="GO:0005840">
    <property type="term" value="C:ribosome"/>
    <property type="evidence" value="ECO:0007669"/>
    <property type="project" value="UniProtKB-KW"/>
</dbReference>
<dbReference type="GO" id="GO:0019843">
    <property type="term" value="F:rRNA binding"/>
    <property type="evidence" value="ECO:0007669"/>
    <property type="project" value="UniProtKB-UniRule"/>
</dbReference>
<dbReference type="GO" id="GO:0003735">
    <property type="term" value="F:structural constituent of ribosome"/>
    <property type="evidence" value="ECO:0007669"/>
    <property type="project" value="InterPro"/>
</dbReference>
<dbReference type="GO" id="GO:0006412">
    <property type="term" value="P:translation"/>
    <property type="evidence" value="ECO:0007669"/>
    <property type="project" value="UniProtKB-UniRule"/>
</dbReference>
<dbReference type="FunFam" id="3.30.420.80:FF:000001">
    <property type="entry name" value="30S ribosomal protein S11"/>
    <property type="match status" value="1"/>
</dbReference>
<dbReference type="Gene3D" id="3.30.420.80">
    <property type="entry name" value="Ribosomal protein S11"/>
    <property type="match status" value="1"/>
</dbReference>
<dbReference type="HAMAP" id="MF_01310">
    <property type="entry name" value="Ribosomal_uS11"/>
    <property type="match status" value="1"/>
</dbReference>
<dbReference type="InterPro" id="IPR001971">
    <property type="entry name" value="Ribosomal_uS11"/>
</dbReference>
<dbReference type="InterPro" id="IPR019981">
    <property type="entry name" value="Ribosomal_uS11_bac-type"/>
</dbReference>
<dbReference type="InterPro" id="IPR018102">
    <property type="entry name" value="Ribosomal_uS11_CS"/>
</dbReference>
<dbReference type="InterPro" id="IPR036967">
    <property type="entry name" value="Ribosomal_uS11_sf"/>
</dbReference>
<dbReference type="NCBIfam" id="NF003698">
    <property type="entry name" value="PRK05309.1"/>
    <property type="match status" value="1"/>
</dbReference>
<dbReference type="NCBIfam" id="TIGR03632">
    <property type="entry name" value="uS11_bact"/>
    <property type="match status" value="1"/>
</dbReference>
<dbReference type="PANTHER" id="PTHR11759">
    <property type="entry name" value="40S RIBOSOMAL PROTEIN S14/30S RIBOSOMAL PROTEIN S11"/>
    <property type="match status" value="1"/>
</dbReference>
<dbReference type="Pfam" id="PF00411">
    <property type="entry name" value="Ribosomal_S11"/>
    <property type="match status" value="1"/>
</dbReference>
<dbReference type="PIRSF" id="PIRSF002131">
    <property type="entry name" value="Ribosomal_S11"/>
    <property type="match status" value="1"/>
</dbReference>
<dbReference type="SUPFAM" id="SSF53137">
    <property type="entry name" value="Translational machinery components"/>
    <property type="match status" value="1"/>
</dbReference>
<dbReference type="PROSITE" id="PS00054">
    <property type="entry name" value="RIBOSOMAL_S11"/>
    <property type="match status" value="1"/>
</dbReference>
<accession>C0ZW52</accession>
<keyword id="KW-0687">Ribonucleoprotein</keyword>
<keyword id="KW-0689">Ribosomal protein</keyword>
<keyword id="KW-0694">RNA-binding</keyword>
<keyword id="KW-0699">rRNA-binding</keyword>
<name>RS11_RHOE4</name>
<reference key="1">
    <citation type="submission" date="2005-03" db="EMBL/GenBank/DDBJ databases">
        <title>Comparison of the complete genome sequences of Rhodococcus erythropolis PR4 and Rhodococcus opacus B4.</title>
        <authorList>
            <person name="Takarada H."/>
            <person name="Sekine M."/>
            <person name="Hosoyama A."/>
            <person name="Yamada R."/>
            <person name="Fujisawa T."/>
            <person name="Omata S."/>
            <person name="Shimizu A."/>
            <person name="Tsukatani N."/>
            <person name="Tanikawa S."/>
            <person name="Fujita N."/>
            <person name="Harayama S."/>
        </authorList>
    </citation>
    <scope>NUCLEOTIDE SEQUENCE [LARGE SCALE GENOMIC DNA]</scope>
    <source>
        <strain>PR4 / NBRC 100887</strain>
    </source>
</reference>
<gene>
    <name evidence="1" type="primary">rpsK</name>
    <name type="ordered locus">RER_18790</name>
</gene>
<sequence>MPPKSRSTGPKKTQKTRRRDKKNIPHGAAHIKSTFNNTIVSITDPAGNVISWASSGHVGFKGSRKSTPFAAQLAAESAARKAQEHGVKKVDVFVKGPGSGRETAIRSLQAAGLEVGTISDVTPQPHNGCRPPKRRRV</sequence>
<organism>
    <name type="scientific">Rhodococcus erythropolis (strain PR4 / NBRC 100887)</name>
    <dbReference type="NCBI Taxonomy" id="234621"/>
    <lineage>
        <taxon>Bacteria</taxon>
        <taxon>Bacillati</taxon>
        <taxon>Actinomycetota</taxon>
        <taxon>Actinomycetes</taxon>
        <taxon>Mycobacteriales</taxon>
        <taxon>Nocardiaceae</taxon>
        <taxon>Rhodococcus</taxon>
        <taxon>Rhodococcus erythropolis group</taxon>
    </lineage>
</organism>
<feature type="chain" id="PRO_1000214371" description="Small ribosomal subunit protein uS11">
    <location>
        <begin position="1"/>
        <end position="137"/>
    </location>
</feature>
<feature type="region of interest" description="Disordered" evidence="2">
    <location>
        <begin position="1"/>
        <end position="27"/>
    </location>
</feature>
<feature type="region of interest" description="Disordered" evidence="2">
    <location>
        <begin position="116"/>
        <end position="137"/>
    </location>
</feature>
<feature type="compositionally biased region" description="Polar residues" evidence="2">
    <location>
        <begin position="1"/>
        <end position="10"/>
    </location>
</feature>
<feature type="compositionally biased region" description="Basic residues" evidence="2">
    <location>
        <begin position="12"/>
        <end position="21"/>
    </location>
</feature>
<comment type="function">
    <text evidence="1">Located on the platform of the 30S subunit, it bridges several disparate RNA helices of the 16S rRNA. Forms part of the Shine-Dalgarno cleft in the 70S ribosome.</text>
</comment>
<comment type="subunit">
    <text evidence="1">Part of the 30S ribosomal subunit. Interacts with proteins S7 and S18. Binds to IF-3.</text>
</comment>
<comment type="similarity">
    <text evidence="1">Belongs to the universal ribosomal protein uS11 family.</text>
</comment>
<proteinExistence type="inferred from homology"/>
<protein>
    <recommendedName>
        <fullName evidence="1">Small ribosomal subunit protein uS11</fullName>
    </recommendedName>
    <alternativeName>
        <fullName evidence="3">30S ribosomal protein S11</fullName>
    </alternativeName>
</protein>
<evidence type="ECO:0000255" key="1">
    <source>
        <dbReference type="HAMAP-Rule" id="MF_01310"/>
    </source>
</evidence>
<evidence type="ECO:0000256" key="2">
    <source>
        <dbReference type="SAM" id="MobiDB-lite"/>
    </source>
</evidence>
<evidence type="ECO:0000305" key="3"/>